<protein>
    <recommendedName>
        <fullName>3 beta-hydroxysteroid dehydrogenase/Delta 5--&gt;4-isomerase type 1</fullName>
    </recommendedName>
    <alternativeName>
        <fullName evidence="10">3 beta-hydroxysteroid dehydrogenase/Delta 5--&gt;4-isomerase type I</fullName>
        <shortName>3-beta-HSD I</shortName>
    </alternativeName>
    <alternativeName>
        <fullName evidence="11">3-beta-hydroxy-5-ene steroid dehydrogenase</fullName>
    </alternativeName>
    <alternativeName>
        <fullName evidence="13">3-beta-hydroxy-Delta(5)-steroid dehydrogenase</fullName>
        <ecNumber evidence="5">1.1.1.145</ecNumber>
    </alternativeName>
    <alternativeName>
        <fullName evidence="13">3-beta-hydroxysteroid 3-dehydrogenase</fullName>
        <ecNumber evidence="5">1.1.1.270</ecNumber>
    </alternativeName>
    <alternativeName>
        <fullName>Delta-5-3-ketosteroid isomerase</fullName>
    </alternativeName>
    <alternativeName>
        <fullName>Dihydrotestosterone oxidoreductase</fullName>
        <ecNumber evidence="5">1.1.1.210</ecNumber>
    </alternativeName>
    <alternativeName>
        <fullName evidence="13">Steroid Delta-isomerase</fullName>
        <ecNumber evidence="5">5.3.3.1</ecNumber>
    </alternativeName>
    <alternativeName>
        <fullName evidence="11">Trophoblast antigen FDO161G</fullName>
    </alternativeName>
</protein>
<comment type="function">
    <text evidence="5 7 13">A bifunctional enzyme responsible for the oxidation and isomerization of 3beta-hydroxy-Delta(5)-steroid precursors to 3-oxo-Delta(4)-steroids, an essential step in steroid hormone biosynthesis. Specifically catalyzes the conversion of pregnenolone to progesterone, 17alpha-hydroxypregnenolone to 17alpha-hydroxyprogesterone, dehydroepiandrosterone (DHEA) to 4-androstenedione, and androstenediol to testosterone. Additionally, catalyzes the interconversion between 3beta-hydroxy and 3-oxo-5alpha-androstane steroids controlling the bioavalability of the active forms. Specifically converts dihydrotestosterone to its inactive form 5alpha-androstanediol, that does not bind androgen receptor/AR. Also converts androstanedione, a precursor of testosterone and estrone, to epiandrosterone (PubMed:1401999, PubMed:2139411). Expected to use NAD(+) as preferred electron donor for the 3beta-hydroxy-steroid dehydrogenase activity and NADPH for the 3-ketosteroid reductase activity (Probable).</text>
</comment>
<comment type="catalytic activity">
    <reaction evidence="5">
        <text>a 3beta-hydroxy-Delta(5)-steroid + NAD(+) = a 3-oxo-Delta(5)-steroid + NADH + H(+)</text>
        <dbReference type="Rhea" id="RHEA:24076"/>
        <dbReference type="ChEBI" id="CHEBI:1722"/>
        <dbReference type="ChEBI" id="CHEBI:15378"/>
        <dbReference type="ChEBI" id="CHEBI:47907"/>
        <dbReference type="ChEBI" id="CHEBI:57540"/>
        <dbReference type="ChEBI" id="CHEBI:57945"/>
        <dbReference type="EC" id="1.1.1.145"/>
    </reaction>
</comment>
<comment type="catalytic activity">
    <reaction evidence="5">
        <text>pregnenolone + NAD(+) = pregn-5-ene-3,20-dione + NADH + H(+)</text>
        <dbReference type="Rhea" id="RHEA:43924"/>
        <dbReference type="ChEBI" id="CHEBI:15378"/>
        <dbReference type="ChEBI" id="CHEBI:16581"/>
        <dbReference type="ChEBI" id="CHEBI:57540"/>
        <dbReference type="ChEBI" id="CHEBI:57945"/>
        <dbReference type="ChEBI" id="CHEBI:63837"/>
    </reaction>
</comment>
<comment type="catalytic activity">
    <reaction evidence="5">
        <text>3beta-hydroxyandrost-5-en-17-one + NAD(+) = androst-5-ene-3,17-dione + NADH + H(+)</text>
        <dbReference type="Rhea" id="RHEA:43932"/>
        <dbReference type="ChEBI" id="CHEBI:15378"/>
        <dbReference type="ChEBI" id="CHEBI:28689"/>
        <dbReference type="ChEBI" id="CHEBI:57540"/>
        <dbReference type="ChEBI" id="CHEBI:57945"/>
        <dbReference type="ChEBI" id="CHEBI:83865"/>
        <dbReference type="EC" id="1.1.1.145"/>
    </reaction>
</comment>
<comment type="catalytic activity">
    <reaction evidence="1">
        <text>androst-5-en-3beta,17beta-diol + NAD(+) = 17beta-hydroxy-androst-5-en-3-one + NADH + H(+)</text>
        <dbReference type="Rhea" id="RHEA:56932"/>
        <dbReference type="ChEBI" id="CHEBI:2710"/>
        <dbReference type="ChEBI" id="CHEBI:15378"/>
        <dbReference type="ChEBI" id="CHEBI:57540"/>
        <dbReference type="ChEBI" id="CHEBI:57945"/>
        <dbReference type="ChEBI" id="CHEBI:141179"/>
    </reaction>
</comment>
<comment type="catalytic activity">
    <reaction evidence="5">
        <text>a 3beta-hydroxysteroid + NADP(+) = a 3-oxosteroid + NADPH + H(+)</text>
        <dbReference type="Rhea" id="RHEA:34787"/>
        <dbReference type="ChEBI" id="CHEBI:15378"/>
        <dbReference type="ChEBI" id="CHEBI:36836"/>
        <dbReference type="ChEBI" id="CHEBI:47788"/>
        <dbReference type="ChEBI" id="CHEBI:57783"/>
        <dbReference type="ChEBI" id="CHEBI:58349"/>
        <dbReference type="EC" id="1.1.1.270"/>
    </reaction>
</comment>
<comment type="catalytic activity">
    <reaction evidence="5">
        <text>5alpha-androstane-3beta,17beta-diol + NADP(+) = 17beta-hydroxy-5alpha-androstan-3-one + NADPH + H(+)</text>
        <dbReference type="Rhea" id="RHEA:16297"/>
        <dbReference type="ChEBI" id="CHEBI:15378"/>
        <dbReference type="ChEBI" id="CHEBI:16330"/>
        <dbReference type="ChEBI" id="CHEBI:18329"/>
        <dbReference type="ChEBI" id="CHEBI:57783"/>
        <dbReference type="ChEBI" id="CHEBI:58349"/>
        <dbReference type="EC" id="1.1.1.210"/>
    </reaction>
</comment>
<comment type="catalytic activity">
    <reaction evidence="1">
        <text>3beta-hydroxy-5alpha-androstan-17-one + NADP(+) = 5alpha-androstan-3,17-dione + NADPH + H(+)</text>
        <dbReference type="Rhea" id="RHEA:56916"/>
        <dbReference type="ChEBI" id="CHEBI:15378"/>
        <dbReference type="ChEBI" id="CHEBI:15994"/>
        <dbReference type="ChEBI" id="CHEBI:57783"/>
        <dbReference type="ChEBI" id="CHEBI:58349"/>
        <dbReference type="ChEBI" id="CHEBI:541975"/>
    </reaction>
</comment>
<comment type="catalytic activity">
    <reaction evidence="5">
        <text>a 3-oxo-Delta(5)-steroid = a 3-oxo-Delta(4)-steroid</text>
        <dbReference type="Rhea" id="RHEA:14709"/>
        <dbReference type="ChEBI" id="CHEBI:47907"/>
        <dbReference type="ChEBI" id="CHEBI:47909"/>
        <dbReference type="EC" id="5.3.3.1"/>
    </reaction>
</comment>
<comment type="catalytic activity">
    <reaction evidence="5">
        <text>pregn-5-ene-3,20-dione = progesterone</text>
        <dbReference type="Rhea" id="RHEA:43928"/>
        <dbReference type="ChEBI" id="CHEBI:17026"/>
        <dbReference type="ChEBI" id="CHEBI:63837"/>
    </reaction>
</comment>
<comment type="catalytic activity">
    <reaction evidence="5">
        <text>androst-5-ene-3,17-dione = androst-4-ene-3,17-dione</text>
        <dbReference type="Rhea" id="RHEA:43936"/>
        <dbReference type="ChEBI" id="CHEBI:16422"/>
        <dbReference type="ChEBI" id="CHEBI:83865"/>
    </reaction>
</comment>
<comment type="catalytic activity">
    <reaction evidence="1">
        <text>17beta-hydroxy-androst-5-en-3-one = testosterone</text>
        <dbReference type="Rhea" id="RHEA:56936"/>
        <dbReference type="ChEBI" id="CHEBI:17347"/>
        <dbReference type="ChEBI" id="CHEBI:141179"/>
    </reaction>
</comment>
<comment type="catalytic activity">
    <reaction evidence="5">
        <text>5alpha-androstane-3beta,17beta-diol + NAD(+) = 17beta-hydroxy-5alpha-androstan-3-one + NADH + H(+)</text>
        <dbReference type="Rhea" id="RHEA:42184"/>
        <dbReference type="ChEBI" id="CHEBI:15378"/>
        <dbReference type="ChEBI" id="CHEBI:16330"/>
        <dbReference type="ChEBI" id="CHEBI:18329"/>
        <dbReference type="ChEBI" id="CHEBI:57540"/>
        <dbReference type="ChEBI" id="CHEBI:57945"/>
    </reaction>
</comment>
<comment type="biophysicochemical properties">
    <kinetics>
        <KM evidence="5">0.13 uM for dehydroepiandrosterone (in the presence of NAD(+))</KM>
        <KM evidence="5">0.33 uM for pregnenolone (in the presence of NAD(+))</KM>
        <KM evidence="5">2.1 uM for dihydrotestosterone (in the presence of NADH)</KM>
        <Vmax evidence="5">0.93 nmol/min/mg enzyme for dehydroepiandrosterone oxidation in the presence of NAD(+)</Vmax>
        <Vmax evidence="5">2.43 nmol/min/mg enzyme for pregnenolone oxidation in the presence of NAD(+)</Vmax>
        <Vmax evidence="5">14.12 nmol/min/mg enzyme for dihydrotestosterone reduction in the presence of NADH</Vmax>
    </kinetics>
</comment>
<comment type="pathway">
    <text evidence="5">Steroid hormone biosynthesis.</text>
</comment>
<comment type="pathway">
    <text evidence="5">Steroid metabolism.</text>
</comment>
<comment type="interaction">
    <interactant intactId="EBI-17426018">
        <id>P14060</id>
    </interactant>
    <interactant intactId="EBI-13059134">
        <id>Q13520</id>
        <label>AQP6</label>
    </interactant>
    <organismsDiffer>false</organismsDiffer>
    <experiments>3</experiments>
</comment>
<comment type="interaction">
    <interactant intactId="EBI-17426018">
        <id>P14060</id>
    </interactant>
    <interactant intactId="EBI-1049597">
        <id>P27797</id>
        <label>CALR</label>
    </interactant>
    <organismsDiffer>false</organismsDiffer>
    <experiments>3</experiments>
</comment>
<comment type="interaction">
    <interactant intactId="EBI-17426018">
        <id>P14060</id>
    </interactant>
    <interactant intactId="EBI-351007">
        <id>P36957</id>
        <label>DLST</label>
    </interactant>
    <organismsDiffer>false</organismsDiffer>
    <experiments>3</experiments>
</comment>
<comment type="interaction">
    <interactant intactId="EBI-17426018">
        <id>P14060</id>
    </interactant>
    <interactant intactId="EBI-348399">
        <id>P22607</id>
        <label>FGFR3</label>
    </interactant>
    <organismsDiffer>false</organismsDiffer>
    <experiments>3</experiments>
</comment>
<comment type="interaction">
    <interactant intactId="EBI-17426018">
        <id>P14060</id>
    </interactant>
    <interactant intactId="EBI-351506">
        <id>P06396</id>
        <label>GSN</label>
    </interactant>
    <organismsDiffer>false</organismsDiffer>
    <experiments>3</experiments>
</comment>
<comment type="interaction">
    <interactant intactId="EBI-17426018">
        <id>P14060</id>
    </interactant>
    <interactant intactId="EBI-1055945">
        <id>Q8TDX7</id>
        <label>NEK7</label>
    </interactant>
    <organismsDiffer>false</organismsDiffer>
    <experiments>3</experiments>
</comment>
<comment type="interaction">
    <interactant intactId="EBI-17426018">
        <id>P14060</id>
    </interactant>
    <interactant intactId="EBI-12243266">
        <id>Q7RTY0</id>
        <label>SLC16A13</label>
    </interactant>
    <organismsDiffer>false</organismsDiffer>
    <experiments>3</experiments>
</comment>
<comment type="interaction">
    <interactant intactId="EBI-17426018">
        <id>P14060</id>
    </interactant>
    <interactant intactId="EBI-8638294">
        <id>Q9NUH8</id>
        <label>TMEM14B</label>
    </interactant>
    <organismsDiffer>false</organismsDiffer>
    <experiments>3</experiments>
</comment>
<comment type="subcellular location">
    <subcellularLocation>
        <location>Endoplasmic reticulum membrane</location>
        <topology>Single-pass membrane protein</topology>
    </subcellularLocation>
    <subcellularLocation>
        <location>Mitochondrion membrane</location>
        <topology>Single-pass membrane protein</topology>
    </subcellularLocation>
</comment>
<comment type="tissue specificity">
    <text evidence="5">Placenta and skin (PubMed:1401999). Predominantly expressed in mammary gland tissue.</text>
</comment>
<comment type="similarity">
    <text evidence="12">Belongs to the 3-beta-HSD family.</text>
</comment>
<comment type="sequence caution" evidence="12">
    <conflict type="erroneous gene model prediction">
        <sequence resource="EMBL-CDS" id="AAA36001"/>
    </conflict>
</comment>
<accession>P14060</accession>
<accession>A8K691</accession>
<accession>Q14545</accession>
<accession>Q8IV65</accession>
<organism>
    <name type="scientific">Homo sapiens</name>
    <name type="common">Human</name>
    <dbReference type="NCBI Taxonomy" id="9606"/>
    <lineage>
        <taxon>Eukaryota</taxon>
        <taxon>Metazoa</taxon>
        <taxon>Chordata</taxon>
        <taxon>Craniata</taxon>
        <taxon>Vertebrata</taxon>
        <taxon>Euteleostomi</taxon>
        <taxon>Mammalia</taxon>
        <taxon>Eutheria</taxon>
        <taxon>Euarchontoglires</taxon>
        <taxon>Primates</taxon>
        <taxon>Haplorrhini</taxon>
        <taxon>Catarrhini</taxon>
        <taxon>Hominidae</taxon>
        <taxon>Homo</taxon>
    </lineage>
</organism>
<gene>
    <name evidence="14" type="primary">HSD3B1</name>
    <name type="synonym">3BH</name>
    <name type="synonym">HSDB3A</name>
</gene>
<proteinExistence type="evidence at protein level"/>
<sequence length="373" mass="42252">MTGWSCLVTGAGGFLGQRIIRLLVKEKELKEIRVLDKAFGPELREEFSKLQNKTKLTVLEGDILDEPFLKRACQDVSVIIHTACIIDVFGVTHRESIMNVNVKGTQLLLEACVQASVPVFIYTSSIEVAGPNSYKEIIQNGHEEEPLENTWPAPYPHSKKLAEKAVLAANGWNLKNGGTLYTCALRPMYIYGEGSRFLSASINEALNNNGILSSVGKFSTVNPVYVGNVAWAHILALRALQDPKKAPSIRGQFYYISDDTPHQSYDNLNYTLSKEFGLRLDSRWSFPLSLMYWIGFLLEIVSFLLRPIYTYRPPFNRHIVTLSNSVFTFSYKKAQRDLAYKPLYSWEEAKQKTVEWVGSLVDRHKETLKSKTQ</sequence>
<name>3BHS1_HUMAN</name>
<reference key="1">
    <citation type="journal article" date="1989" name="Mol. Endocrinol.">
        <title>Full length cDNA structure and deduced amino acid sequence of human 3 beta-hydroxy-5-ene steroid dehydrogenase.</title>
        <authorList>
            <person name="Luu-The V."/>
            <person name="Lachance Y."/>
            <person name="Labrie F."/>
            <person name="Leblanc G."/>
            <person name="Thomas J.L."/>
            <person name="Strickler R.C."/>
            <person name="Labrie C."/>
        </authorList>
    </citation>
    <scope>NUCLEOTIDE SEQUENCE [MRNA]</scope>
    <scope>PROTEIN SEQUENCE OF 2-30</scope>
</reference>
<reference key="2">
    <citation type="journal article" date="1990" name="Endocrinology">
        <title>Human 3 beta-hydroxysteroid dehydrogenase/delta 5--&gt;4-isomerase from placenta: expression in nonsteroidogenic cells of a protein that catalyzes the dehydrogenation/isomerization of C21 and C19 steroids.</title>
        <authorList>
            <person name="Lorence M.C."/>
            <person name="Murry B.A."/>
            <person name="Trant J.M."/>
            <person name="Mason J.I."/>
        </authorList>
    </citation>
    <scope>NUCLEOTIDE SEQUENCE [MRNA]</scope>
    <scope>FUNCTION</scope>
    <source>
        <tissue>Placenta</tissue>
    </source>
</reference>
<reference key="3">
    <citation type="journal article" date="1990" name="Mol. Endocrinol.">
        <title>Structural analysis of the gene encoding human 3 beta-hydroxysteroid dehydrogenase/delta 5--&gt;4-isomerase.</title>
        <authorList>
            <person name="Lorence M.C."/>
            <person name="Corbin C.J."/>
            <person name="Kamimura N."/>
            <person name="Mahendroo M.S."/>
            <person name="Mason J.I."/>
        </authorList>
    </citation>
    <scope>NUCLEOTIDE SEQUENCE [GENOMIC DNA]</scope>
</reference>
<reference key="4">
    <citation type="journal article" date="1990" name="J. Biol. Chem.">
        <title>Characterization of human 3 beta-hydroxysteroid dehydrogenase/delta 5-delta 4-isomerase gene and its expression in mammalian cells.</title>
        <authorList>
            <person name="Lachance Y."/>
            <person name="Luu-The V."/>
            <person name="Labrie C."/>
            <person name="Simard J."/>
            <person name="Dumont M."/>
            <person name="Launoit Y.D."/>
            <person name="Guerin S."/>
            <person name="Leblanc G."/>
            <person name="Labrie F."/>
        </authorList>
    </citation>
    <scope>NUCLEOTIDE SEQUENCE [GENOMIC DNA]</scope>
    <scope>VARIANT ASN-367</scope>
</reference>
<reference key="5">
    <citation type="journal article" date="1991" name="J. Reprod. Fertil.">
        <title>Molecular cloning and expression of human trophoblast antigen FDO161G and its identification as 3 beta-hydroxy-5-ene steroid dehydrogenase.</title>
        <authorList>
            <person name="Nickson D.A."/>
            <person name="McBride M.W."/>
            <person name="Zeinali S."/>
            <person name="Hawes C.S."/>
            <person name="Petropoulos A."/>
            <person name="Mueller U.W."/>
            <person name="Sutcliffe R.G."/>
        </authorList>
    </citation>
    <scope>NUCLEOTIDE SEQUENCE [MRNA]</scope>
    <source>
        <tissue>Placenta</tissue>
    </source>
</reference>
<reference key="6">
    <citation type="journal article" date="1992" name="J. Invest. Dermatol.">
        <title>Characterization, expression, and immunohistochemical localization of 3 beta-hydroxysteroid dehydrogenase/delta 5-delta 4 isomerase in human skin.</title>
        <authorList>
            <person name="Dumont M."/>
            <person name="Van L.T."/>
            <person name="Dupont E."/>
            <person name="Pelletier G."/>
            <person name="Labrie F."/>
        </authorList>
    </citation>
    <scope>NUCLEOTIDE SEQUENCE [MRNA]</scope>
    <scope>FUNCTION</scope>
    <scope>BIOPHYSICOCHEMICAL PROPERTIES</scope>
    <scope>SUBSTRATE SPECIFICITY</scope>
    <scope>TISSUE SPECIFICITY</scope>
    <scope>CATALYTIC ACTIVITY</scope>
    <scope>PATHWAY</scope>
</reference>
<reference key="7">
    <citation type="journal article" date="2004" name="Nat. Genet.">
        <title>Complete sequencing and characterization of 21,243 full-length human cDNAs.</title>
        <authorList>
            <person name="Ota T."/>
            <person name="Suzuki Y."/>
            <person name="Nishikawa T."/>
            <person name="Otsuki T."/>
            <person name="Sugiyama T."/>
            <person name="Irie R."/>
            <person name="Wakamatsu A."/>
            <person name="Hayashi K."/>
            <person name="Sato H."/>
            <person name="Nagai K."/>
            <person name="Kimura K."/>
            <person name="Makita H."/>
            <person name="Sekine M."/>
            <person name="Obayashi M."/>
            <person name="Nishi T."/>
            <person name="Shibahara T."/>
            <person name="Tanaka T."/>
            <person name="Ishii S."/>
            <person name="Yamamoto J."/>
            <person name="Saito K."/>
            <person name="Kawai Y."/>
            <person name="Isono Y."/>
            <person name="Nakamura Y."/>
            <person name="Nagahari K."/>
            <person name="Murakami K."/>
            <person name="Yasuda T."/>
            <person name="Iwayanagi T."/>
            <person name="Wagatsuma M."/>
            <person name="Shiratori A."/>
            <person name="Sudo H."/>
            <person name="Hosoiri T."/>
            <person name="Kaku Y."/>
            <person name="Kodaira H."/>
            <person name="Kondo H."/>
            <person name="Sugawara M."/>
            <person name="Takahashi M."/>
            <person name="Kanda K."/>
            <person name="Yokoi T."/>
            <person name="Furuya T."/>
            <person name="Kikkawa E."/>
            <person name="Omura Y."/>
            <person name="Abe K."/>
            <person name="Kamihara K."/>
            <person name="Katsuta N."/>
            <person name="Sato K."/>
            <person name="Tanikawa M."/>
            <person name="Yamazaki M."/>
            <person name="Ninomiya K."/>
            <person name="Ishibashi T."/>
            <person name="Yamashita H."/>
            <person name="Murakawa K."/>
            <person name="Fujimori K."/>
            <person name="Tanai H."/>
            <person name="Kimata M."/>
            <person name="Watanabe M."/>
            <person name="Hiraoka S."/>
            <person name="Chiba Y."/>
            <person name="Ishida S."/>
            <person name="Ono Y."/>
            <person name="Takiguchi S."/>
            <person name="Watanabe S."/>
            <person name="Yosida M."/>
            <person name="Hotuta T."/>
            <person name="Kusano J."/>
            <person name="Kanehori K."/>
            <person name="Takahashi-Fujii A."/>
            <person name="Hara H."/>
            <person name="Tanase T.-O."/>
            <person name="Nomura Y."/>
            <person name="Togiya S."/>
            <person name="Komai F."/>
            <person name="Hara R."/>
            <person name="Takeuchi K."/>
            <person name="Arita M."/>
            <person name="Imose N."/>
            <person name="Musashino K."/>
            <person name="Yuuki H."/>
            <person name="Oshima A."/>
            <person name="Sasaki N."/>
            <person name="Aotsuka S."/>
            <person name="Yoshikawa Y."/>
            <person name="Matsunawa H."/>
            <person name="Ichihara T."/>
            <person name="Shiohata N."/>
            <person name="Sano S."/>
            <person name="Moriya S."/>
            <person name="Momiyama H."/>
            <person name="Satoh N."/>
            <person name="Takami S."/>
            <person name="Terashima Y."/>
            <person name="Suzuki O."/>
            <person name="Nakagawa S."/>
            <person name="Senoh A."/>
            <person name="Mizoguchi H."/>
            <person name="Goto Y."/>
            <person name="Shimizu F."/>
            <person name="Wakebe H."/>
            <person name="Hishigaki H."/>
            <person name="Watanabe T."/>
            <person name="Sugiyama A."/>
            <person name="Takemoto M."/>
            <person name="Kawakami B."/>
            <person name="Yamazaki M."/>
            <person name="Watanabe K."/>
            <person name="Kumagai A."/>
            <person name="Itakura S."/>
            <person name="Fukuzumi Y."/>
            <person name="Fujimori Y."/>
            <person name="Komiyama M."/>
            <person name="Tashiro H."/>
            <person name="Tanigami A."/>
            <person name="Fujiwara T."/>
            <person name="Ono T."/>
            <person name="Yamada K."/>
            <person name="Fujii Y."/>
            <person name="Ozaki K."/>
            <person name="Hirao M."/>
            <person name="Ohmori Y."/>
            <person name="Kawabata A."/>
            <person name="Hikiji T."/>
            <person name="Kobatake N."/>
            <person name="Inagaki H."/>
            <person name="Ikema Y."/>
            <person name="Okamoto S."/>
            <person name="Okitani R."/>
            <person name="Kawakami T."/>
            <person name="Noguchi S."/>
            <person name="Itoh T."/>
            <person name="Shigeta K."/>
            <person name="Senba T."/>
            <person name="Matsumura K."/>
            <person name="Nakajima Y."/>
            <person name="Mizuno T."/>
            <person name="Morinaga M."/>
            <person name="Sasaki M."/>
            <person name="Togashi T."/>
            <person name="Oyama M."/>
            <person name="Hata H."/>
            <person name="Watanabe M."/>
            <person name="Komatsu T."/>
            <person name="Mizushima-Sugano J."/>
            <person name="Satoh T."/>
            <person name="Shirai Y."/>
            <person name="Takahashi Y."/>
            <person name="Nakagawa K."/>
            <person name="Okumura K."/>
            <person name="Nagase T."/>
            <person name="Nomura N."/>
            <person name="Kikuchi H."/>
            <person name="Masuho Y."/>
            <person name="Yamashita R."/>
            <person name="Nakai K."/>
            <person name="Yada T."/>
            <person name="Nakamura Y."/>
            <person name="Ohara O."/>
            <person name="Isogai T."/>
            <person name="Sugano S."/>
        </authorList>
    </citation>
    <scope>NUCLEOTIDE SEQUENCE [LARGE SCALE MRNA]</scope>
    <source>
        <tissue>Placenta</tissue>
    </source>
</reference>
<reference key="8">
    <citation type="journal article" date="2004" name="Genome Res.">
        <title>The status, quality, and expansion of the NIH full-length cDNA project: the Mammalian Gene Collection (MGC).</title>
        <authorList>
            <consortium name="The MGC Project Team"/>
        </authorList>
    </citation>
    <scope>NUCLEOTIDE SEQUENCE [LARGE SCALE MRNA]</scope>
    <scope>VARIANT ASN-367</scope>
    <source>
        <tissue>Skin</tissue>
    </source>
</reference>
<reference key="9">
    <citation type="journal article" date="1999" name="Nat. Genet.">
        <title>Characterization of single-nucleotide polymorphisms in coding regions of human genes.</title>
        <authorList>
            <person name="Cargill M."/>
            <person name="Altshuler D."/>
            <person name="Ireland J."/>
            <person name="Sklar P."/>
            <person name="Ardlie K."/>
            <person name="Patil N."/>
            <person name="Shaw N."/>
            <person name="Lane C.R."/>
            <person name="Lim E.P."/>
            <person name="Kalyanaraman N."/>
            <person name="Nemesh J."/>
            <person name="Ziaugra L."/>
            <person name="Friedland L."/>
            <person name="Rolfe A."/>
            <person name="Warrington J."/>
            <person name="Lipshutz R."/>
            <person name="Daley G.Q."/>
            <person name="Lander E.S."/>
        </authorList>
    </citation>
    <scope>VARIANTS VAL-79 AND LEU-286</scope>
</reference>
<reference key="10">
    <citation type="journal article" date="1999" name="Nat. Genet.">
        <authorList>
            <person name="Cargill M."/>
            <person name="Altshuler D."/>
            <person name="Ireland J."/>
            <person name="Sklar P."/>
            <person name="Ardlie K."/>
            <person name="Patil N."/>
            <person name="Shaw N."/>
            <person name="Lane C.R."/>
            <person name="Lim E.P."/>
            <person name="Kalyanaraman N."/>
            <person name="Nemesh J."/>
            <person name="Ziaugra L."/>
            <person name="Friedland L."/>
            <person name="Rolfe A."/>
            <person name="Warrington J."/>
            <person name="Lipshutz R."/>
            <person name="Daley G.Q."/>
            <person name="Lander E.S."/>
        </authorList>
    </citation>
    <scope>ERRATUM OF PUBMED:10391209</scope>
</reference>
<evidence type="ECO:0000250" key="1">
    <source>
        <dbReference type="UniProtKB" id="P22071"/>
    </source>
</evidence>
<evidence type="ECO:0000250" key="2">
    <source>
        <dbReference type="UniProtKB" id="Q12068"/>
    </source>
</evidence>
<evidence type="ECO:0000255" key="3"/>
<evidence type="ECO:0000269" key="4">
    <source>
    </source>
</evidence>
<evidence type="ECO:0000269" key="5">
    <source>
    </source>
</evidence>
<evidence type="ECO:0000269" key="6">
    <source>
    </source>
</evidence>
<evidence type="ECO:0000269" key="7">
    <source>
    </source>
</evidence>
<evidence type="ECO:0000269" key="8">
    <source>
    </source>
</evidence>
<evidence type="ECO:0000269" key="9">
    <source>
    </source>
</evidence>
<evidence type="ECO:0000303" key="10">
    <source>
    </source>
</evidence>
<evidence type="ECO:0000303" key="11">
    <source>
    </source>
</evidence>
<evidence type="ECO:0000305" key="12"/>
<evidence type="ECO:0000305" key="13">
    <source>
    </source>
</evidence>
<evidence type="ECO:0000312" key="14">
    <source>
        <dbReference type="HGNC" id="HGNC:5217"/>
    </source>
</evidence>
<dbReference type="EC" id="1.1.1.145" evidence="5"/>
<dbReference type="EC" id="1.1.1.270" evidence="5"/>
<dbReference type="EC" id="1.1.1.210" evidence="5"/>
<dbReference type="EC" id="5.3.3.1" evidence="5"/>
<dbReference type="EMBL" id="M27137">
    <property type="protein sequence ID" value="AAA36015.1"/>
    <property type="molecule type" value="mRNA"/>
</dbReference>
<dbReference type="EMBL" id="M28392">
    <property type="protein sequence ID" value="AAA36001.1"/>
    <property type="status" value="ALT_SEQ"/>
    <property type="molecule type" value="Genomic_DNA"/>
</dbReference>
<dbReference type="EMBL" id="M28162">
    <property type="protein sequence ID" value="AAA36001.1"/>
    <property type="status" value="JOINED"/>
    <property type="molecule type" value="Genomic_DNA"/>
</dbReference>
<dbReference type="EMBL" id="M28391">
    <property type="protein sequence ID" value="AAA36001.1"/>
    <property type="status" value="JOINED"/>
    <property type="molecule type" value="Genomic_DNA"/>
</dbReference>
<dbReference type="EMBL" id="X53321">
    <property type="protein sequence ID" value="CAA37408.1"/>
    <property type="molecule type" value="mRNA"/>
</dbReference>
<dbReference type="EMBL" id="M35493">
    <property type="protein sequence ID" value="AAA51538.1"/>
    <property type="molecule type" value="mRNA"/>
</dbReference>
<dbReference type="EMBL" id="M63397">
    <property type="protein sequence ID" value="AAA51662.1"/>
    <property type="molecule type" value="Genomic_DNA"/>
</dbReference>
<dbReference type="EMBL" id="M63395">
    <property type="protein sequence ID" value="AAA51662.1"/>
    <property type="status" value="JOINED"/>
    <property type="molecule type" value="Genomic_DNA"/>
</dbReference>
<dbReference type="EMBL" id="M63396">
    <property type="protein sequence ID" value="AAA51662.1"/>
    <property type="status" value="JOINED"/>
    <property type="molecule type" value="Genomic_DNA"/>
</dbReference>
<dbReference type="EMBL" id="M38180">
    <property type="protein sequence ID" value="AAA51831.1"/>
    <property type="molecule type" value="Genomic_DNA"/>
</dbReference>
<dbReference type="EMBL" id="X55997">
    <property type="protein sequence ID" value="CAA39469.1"/>
    <property type="molecule type" value="mRNA"/>
</dbReference>
<dbReference type="EMBL" id="S45679">
    <property type="protein sequence ID" value="AAB23543.1"/>
    <property type="molecule type" value="mRNA"/>
</dbReference>
<dbReference type="EMBL" id="AK291556">
    <property type="protein sequence ID" value="BAF84245.1"/>
    <property type="molecule type" value="mRNA"/>
</dbReference>
<dbReference type="EMBL" id="BC031999">
    <property type="protein sequence ID" value="AAH31999.1"/>
    <property type="molecule type" value="mRNA"/>
</dbReference>
<dbReference type="CCDS" id="CCDS903.1"/>
<dbReference type="PIR" id="A36551">
    <property type="entry name" value="DEHUHS"/>
</dbReference>
<dbReference type="RefSeq" id="NP_000853.1">
    <property type="nucleotide sequence ID" value="NM_000862.3"/>
</dbReference>
<dbReference type="RefSeq" id="NP_001315544.1">
    <property type="nucleotide sequence ID" value="NM_001328615.1"/>
</dbReference>
<dbReference type="SMR" id="P14060"/>
<dbReference type="BioGRID" id="109516">
    <property type="interactions" value="8"/>
</dbReference>
<dbReference type="FunCoup" id="P14060">
    <property type="interactions" value="93"/>
</dbReference>
<dbReference type="IntAct" id="P14060">
    <property type="interactions" value="11"/>
</dbReference>
<dbReference type="STRING" id="9606.ENSP00000358421"/>
<dbReference type="BindingDB" id="P14060"/>
<dbReference type="ChEMBL" id="CHEMBL1958"/>
<dbReference type="DrugBank" id="DB01536">
    <property type="generic name" value="Androstenedione"/>
</dbReference>
<dbReference type="DrugBank" id="DB14538">
    <property type="generic name" value="Hydrocortisone aceponate"/>
</dbReference>
<dbReference type="DrugBank" id="DB14539">
    <property type="generic name" value="Hydrocortisone acetate"/>
</dbReference>
<dbReference type="DrugBank" id="DB14540">
    <property type="generic name" value="Hydrocortisone butyrate"/>
</dbReference>
<dbReference type="DrugBank" id="DB14541">
    <property type="generic name" value="Hydrocortisone cypionate"/>
</dbReference>
<dbReference type="DrugBank" id="DB14542">
    <property type="generic name" value="Hydrocortisone phosphate"/>
</dbReference>
<dbReference type="DrugBank" id="DB14543">
    <property type="generic name" value="Hydrocortisone probutate"/>
</dbReference>
<dbReference type="DrugBank" id="DB14544">
    <property type="generic name" value="Hydrocortisone valerate"/>
</dbReference>
<dbReference type="DrugBank" id="DB00157">
    <property type="generic name" value="NADH"/>
</dbReference>
<dbReference type="DrugBank" id="DB01708">
    <property type="generic name" value="Prasterone"/>
</dbReference>
<dbReference type="DrugBank" id="DB09070">
    <property type="generic name" value="Tibolone"/>
</dbReference>
<dbReference type="DrugBank" id="DB01108">
    <property type="generic name" value="Trilostane"/>
</dbReference>
<dbReference type="DrugCentral" id="P14060"/>
<dbReference type="SwissLipids" id="SLP:000001297"/>
<dbReference type="GlyGen" id="P14060">
    <property type="glycosylation" value="1 site, 1 O-linked glycan (1 site)"/>
</dbReference>
<dbReference type="iPTMnet" id="P14060"/>
<dbReference type="PhosphoSitePlus" id="P14060"/>
<dbReference type="BioMuta" id="HSD3B1"/>
<dbReference type="DMDM" id="112767"/>
<dbReference type="jPOST" id="P14060"/>
<dbReference type="MassIVE" id="P14060"/>
<dbReference type="PaxDb" id="9606-ENSP00000358421"/>
<dbReference type="PeptideAtlas" id="P14060"/>
<dbReference type="ProteomicsDB" id="53017"/>
<dbReference type="Antibodypedia" id="33912">
    <property type="antibodies" value="363 antibodies from 30 providers"/>
</dbReference>
<dbReference type="DNASU" id="3283"/>
<dbReference type="Ensembl" id="ENST00000369413.8">
    <property type="protein sequence ID" value="ENSP00000358421.3"/>
    <property type="gene ID" value="ENSG00000203857.10"/>
</dbReference>
<dbReference type="Ensembl" id="ENST00000528909.1">
    <property type="protein sequence ID" value="ENSP00000432268.1"/>
    <property type="gene ID" value="ENSG00000203857.10"/>
</dbReference>
<dbReference type="GeneID" id="3283"/>
<dbReference type="KEGG" id="hsa:3283"/>
<dbReference type="MANE-Select" id="ENST00000369413.8">
    <property type="protein sequence ID" value="ENSP00000358421.3"/>
    <property type="RefSeq nucleotide sequence ID" value="NM_000862.3"/>
    <property type="RefSeq protein sequence ID" value="NP_000853.1"/>
</dbReference>
<dbReference type="UCSC" id="uc001ehv.2">
    <property type="organism name" value="human"/>
</dbReference>
<dbReference type="AGR" id="HGNC:5217"/>
<dbReference type="CTD" id="3283"/>
<dbReference type="DisGeNET" id="3283"/>
<dbReference type="GeneCards" id="HSD3B1"/>
<dbReference type="HGNC" id="HGNC:5217">
    <property type="gene designation" value="HSD3B1"/>
</dbReference>
<dbReference type="HPA" id="ENSG00000203857">
    <property type="expression patterns" value="Tissue enriched (placenta)"/>
</dbReference>
<dbReference type="MalaCards" id="HSD3B1"/>
<dbReference type="MIM" id="109715">
    <property type="type" value="gene"/>
</dbReference>
<dbReference type="neXtProt" id="NX_P14060"/>
<dbReference type="OpenTargets" id="ENSG00000203857"/>
<dbReference type="PharmGKB" id="PA29486"/>
<dbReference type="VEuPathDB" id="HostDB:ENSG00000203857"/>
<dbReference type="eggNOG" id="KOG1430">
    <property type="taxonomic scope" value="Eukaryota"/>
</dbReference>
<dbReference type="GeneTree" id="ENSGT00940000161374"/>
<dbReference type="HOGENOM" id="CLU_007383_6_3_1"/>
<dbReference type="InParanoid" id="P14060"/>
<dbReference type="OMA" id="YVENCTY"/>
<dbReference type="OrthoDB" id="1925334at2759"/>
<dbReference type="PAN-GO" id="P14060">
    <property type="GO annotations" value="7 GO annotations based on evolutionary models"/>
</dbReference>
<dbReference type="PhylomeDB" id="P14060"/>
<dbReference type="TreeFam" id="TF343138"/>
<dbReference type="BioCyc" id="MetaCyc:HS08829-MONOMER"/>
<dbReference type="BRENDA" id="1.1.1.145">
    <property type="organism ID" value="2681"/>
</dbReference>
<dbReference type="BRENDA" id="5.3.3.1">
    <property type="organism ID" value="2681"/>
</dbReference>
<dbReference type="PathwayCommons" id="P14060"/>
<dbReference type="Reactome" id="R-HSA-193048">
    <property type="pathway name" value="Androgen biosynthesis"/>
</dbReference>
<dbReference type="Reactome" id="R-HSA-193993">
    <property type="pathway name" value="Mineralocorticoid biosynthesis"/>
</dbReference>
<dbReference type="Reactome" id="R-HSA-194002">
    <property type="pathway name" value="Glucocorticoid biosynthesis"/>
</dbReference>
<dbReference type="SABIO-RK" id="P14060"/>
<dbReference type="SignaLink" id="P14060"/>
<dbReference type="SIGNOR" id="P14060"/>
<dbReference type="BioGRID-ORCS" id="3283">
    <property type="hits" value="24 hits in 1115 CRISPR screens"/>
</dbReference>
<dbReference type="GeneWiki" id="HSD3B1"/>
<dbReference type="GenomeRNAi" id="3283"/>
<dbReference type="Pharos" id="P14060">
    <property type="development level" value="Tchem"/>
</dbReference>
<dbReference type="PRO" id="PR:P14060"/>
<dbReference type="Proteomes" id="UP000005640">
    <property type="component" value="Chromosome 1"/>
</dbReference>
<dbReference type="RNAct" id="P14060">
    <property type="molecule type" value="protein"/>
</dbReference>
<dbReference type="Bgee" id="ENSG00000203857">
    <property type="expression patterns" value="Expressed in placenta and 97 other cell types or tissues"/>
</dbReference>
<dbReference type="ExpressionAtlas" id="P14060">
    <property type="expression patterns" value="baseline and differential"/>
</dbReference>
<dbReference type="GO" id="GO:0005929">
    <property type="term" value="C:cilium"/>
    <property type="evidence" value="ECO:0000314"/>
    <property type="project" value="HPA"/>
</dbReference>
<dbReference type="GO" id="GO:0005737">
    <property type="term" value="C:cytoplasm"/>
    <property type="evidence" value="ECO:0000318"/>
    <property type="project" value="GO_Central"/>
</dbReference>
<dbReference type="GO" id="GO:0005783">
    <property type="term" value="C:endoplasmic reticulum"/>
    <property type="evidence" value="ECO:0000314"/>
    <property type="project" value="HPA"/>
</dbReference>
<dbReference type="GO" id="GO:0005789">
    <property type="term" value="C:endoplasmic reticulum membrane"/>
    <property type="evidence" value="ECO:0000304"/>
    <property type="project" value="Reactome"/>
</dbReference>
<dbReference type="GO" id="GO:0045171">
    <property type="term" value="C:intercellular bridge"/>
    <property type="evidence" value="ECO:0000314"/>
    <property type="project" value="HPA"/>
</dbReference>
<dbReference type="GO" id="GO:0043231">
    <property type="term" value="C:intracellular membrane-bounded organelle"/>
    <property type="evidence" value="ECO:0000318"/>
    <property type="project" value="GO_Central"/>
</dbReference>
<dbReference type="GO" id="GO:0015630">
    <property type="term" value="C:microtubule cytoskeleton"/>
    <property type="evidence" value="ECO:0000314"/>
    <property type="project" value="HPA"/>
</dbReference>
<dbReference type="GO" id="GO:0005743">
    <property type="term" value="C:mitochondrial inner membrane"/>
    <property type="evidence" value="ECO:0000314"/>
    <property type="project" value="UniProtKB"/>
</dbReference>
<dbReference type="GO" id="GO:0005758">
    <property type="term" value="C:mitochondrial intermembrane space"/>
    <property type="evidence" value="ECO:0000314"/>
    <property type="project" value="UniProtKB"/>
</dbReference>
<dbReference type="GO" id="GO:0005730">
    <property type="term" value="C:nucleolus"/>
    <property type="evidence" value="ECO:0000314"/>
    <property type="project" value="HPA"/>
</dbReference>
<dbReference type="GO" id="GO:0030868">
    <property type="term" value="C:smooth endoplasmic reticulum membrane"/>
    <property type="evidence" value="ECO:0000250"/>
    <property type="project" value="UniProtKB"/>
</dbReference>
<dbReference type="GO" id="GO:0003854">
    <property type="term" value="F:3-beta-hydroxy-Delta5-steroid dehydrogenase (NAD+) activity"/>
    <property type="evidence" value="ECO:0000250"/>
    <property type="project" value="UniProtKB"/>
</dbReference>
<dbReference type="GO" id="GO:0000253">
    <property type="term" value="F:3-beta-hydroxysteroid 3-dehydrogenase (NADP+) activity"/>
    <property type="evidence" value="ECO:0007669"/>
    <property type="project" value="UniProtKB-EC"/>
</dbReference>
<dbReference type="GO" id="GO:0047024">
    <property type="term" value="F:5-alpha-androstane-3-beta,17-beta-diol dehydrogenase (NADP+) activity"/>
    <property type="evidence" value="ECO:0007669"/>
    <property type="project" value="UniProtKB-EC"/>
</dbReference>
<dbReference type="GO" id="GO:0016616">
    <property type="term" value="F:oxidoreductase activity, acting on the CH-OH group of donors, NAD or NADP as acceptor"/>
    <property type="evidence" value="ECO:0000318"/>
    <property type="project" value="GO_Central"/>
</dbReference>
<dbReference type="GO" id="GO:0004769">
    <property type="term" value="F:steroid Delta-isomerase activity"/>
    <property type="evidence" value="ECO:0000250"/>
    <property type="project" value="UniProtKB"/>
</dbReference>
<dbReference type="GO" id="GO:0006702">
    <property type="term" value="P:androgen biosynthetic process"/>
    <property type="evidence" value="ECO:0000304"/>
    <property type="project" value="UniProtKB"/>
</dbReference>
<dbReference type="GO" id="GO:0008207">
    <property type="term" value="P:C21-steroid hormone metabolic process"/>
    <property type="evidence" value="ECO:0000318"/>
    <property type="project" value="GO_Central"/>
</dbReference>
<dbReference type="GO" id="GO:0006703">
    <property type="term" value="P:estrogen biosynthetic process"/>
    <property type="evidence" value="ECO:0000304"/>
    <property type="project" value="UniProtKB"/>
</dbReference>
<dbReference type="GO" id="GO:0006694">
    <property type="term" value="P:steroid biosynthetic process"/>
    <property type="evidence" value="ECO:0000250"/>
    <property type="project" value="UniProtKB"/>
</dbReference>
<dbReference type="CDD" id="cd09811">
    <property type="entry name" value="3b-HSD_HSDB1_like_SDR_e"/>
    <property type="match status" value="1"/>
</dbReference>
<dbReference type="FunFam" id="3.40.50.720:FF:000220">
    <property type="entry name" value="3 beta-hydroxysteroid dehydrogenase/Delta 5--&gt;4-isomerase type 1"/>
    <property type="match status" value="1"/>
</dbReference>
<dbReference type="Gene3D" id="3.40.50.720">
    <property type="entry name" value="NAD(P)-binding Rossmann-like Domain"/>
    <property type="match status" value="1"/>
</dbReference>
<dbReference type="InterPro" id="IPR002225">
    <property type="entry name" value="3Beta_OHSteriod_DH/Estase"/>
</dbReference>
<dbReference type="InterPro" id="IPR050177">
    <property type="entry name" value="Lipid_A_modif_metabolic_enz"/>
</dbReference>
<dbReference type="InterPro" id="IPR036291">
    <property type="entry name" value="NAD(P)-bd_dom_sf"/>
</dbReference>
<dbReference type="PANTHER" id="PTHR43245">
    <property type="entry name" value="BIFUNCTIONAL POLYMYXIN RESISTANCE PROTEIN ARNA"/>
    <property type="match status" value="1"/>
</dbReference>
<dbReference type="PANTHER" id="PTHR43245:SF51">
    <property type="entry name" value="SHORT CHAIN DEHYDROGENASE_REDUCTASE FAMILY 42E, MEMBER 2"/>
    <property type="match status" value="1"/>
</dbReference>
<dbReference type="Pfam" id="PF01073">
    <property type="entry name" value="3Beta_HSD"/>
    <property type="match status" value="1"/>
</dbReference>
<dbReference type="SUPFAM" id="SSF51735">
    <property type="entry name" value="NAD(P)-binding Rossmann-fold domains"/>
    <property type="match status" value="1"/>
</dbReference>
<keyword id="KW-0903">Direct protein sequencing</keyword>
<keyword id="KW-0256">Endoplasmic reticulum</keyword>
<keyword id="KW-0413">Isomerase</keyword>
<keyword id="KW-0443">Lipid metabolism</keyword>
<keyword id="KW-0472">Membrane</keyword>
<keyword id="KW-0496">Mitochondrion</keyword>
<keyword id="KW-0511">Multifunctional enzyme</keyword>
<keyword id="KW-0520">NAD</keyword>
<keyword id="KW-0521">NADP</keyword>
<keyword id="KW-0560">Oxidoreductase</keyword>
<keyword id="KW-1267">Proteomics identification</keyword>
<keyword id="KW-1185">Reference proteome</keyword>
<keyword id="KW-0753">Steroid metabolism</keyword>
<keyword id="KW-0755">Steroidogenesis</keyword>
<keyword id="KW-0812">Transmembrane</keyword>
<keyword id="KW-1133">Transmembrane helix</keyword>
<feature type="initiator methionine" description="Removed" evidence="9">
    <location>
        <position position="1"/>
    </location>
</feature>
<feature type="chain" id="PRO_0000087774" description="3 beta-hydroxysteroid dehydrogenase/Delta 5--&gt;4-isomerase type 1">
    <location>
        <begin position="2"/>
        <end position="373"/>
    </location>
</feature>
<feature type="transmembrane region" description="Helical" evidence="3">
    <location>
        <begin position="288"/>
        <end position="308"/>
    </location>
</feature>
<feature type="active site" description="Proton donor" evidence="2">
    <location>
        <position position="159"/>
    </location>
</feature>
<feature type="binding site" evidence="2">
    <location>
        <begin position="10"/>
        <end position="15"/>
    </location>
    <ligand>
        <name>NADP(+)</name>
        <dbReference type="ChEBI" id="CHEBI:58349"/>
    </ligand>
</feature>
<feature type="binding site" evidence="2">
    <location>
        <position position="155"/>
    </location>
    <ligand>
        <name>NADP(+)</name>
        <dbReference type="ChEBI" id="CHEBI:58349"/>
    </ligand>
</feature>
<feature type="binding site" evidence="2">
    <location>
        <position position="159"/>
    </location>
    <ligand>
        <name>NADP(+)</name>
        <dbReference type="ChEBI" id="CHEBI:58349"/>
    </ligand>
</feature>
<feature type="sequence variant" id="VAR_048096" description="In dbSNP:rs3088283.">
    <original>T</original>
    <variation>I</variation>
    <location>
        <position position="54"/>
    </location>
</feature>
<feature type="sequence variant" id="VAR_048097" description="In dbSNP:rs4986952.">
    <original>R</original>
    <variation>I</variation>
    <location>
        <position position="71"/>
    </location>
</feature>
<feature type="sequence variant" id="VAR_014174" description="In dbSNP:rs6201." evidence="4">
    <original>I</original>
    <variation>V</variation>
    <location>
        <position position="79"/>
    </location>
</feature>
<feature type="sequence variant" id="VAR_048098" description="In dbSNP:rs6684974.">
    <original>G</original>
    <variation>S</variation>
    <location>
        <position position="90"/>
    </location>
</feature>
<feature type="sequence variant" id="VAR_014175" description="In dbSNP:rs6205." evidence="4">
    <original>F</original>
    <variation>L</variation>
    <location>
        <position position="286"/>
    </location>
</feature>
<feature type="sequence variant" id="VAR_000005" description="In dbSNP:rs1047303." evidence="6 8">
    <original>T</original>
    <variation>N</variation>
    <location>
        <position position="367"/>
    </location>
</feature>